<reference key="1">
    <citation type="submission" date="2007-11" db="EMBL/GenBank/DDBJ databases">
        <authorList>
            <consortium name="The Salmonella enterica serovar Arizonae Genome Sequencing Project"/>
            <person name="McClelland M."/>
            <person name="Sanderson E.K."/>
            <person name="Porwollik S."/>
            <person name="Spieth J."/>
            <person name="Clifton W.S."/>
            <person name="Fulton R."/>
            <person name="Chunyan W."/>
            <person name="Wollam A."/>
            <person name="Shah N."/>
            <person name="Pepin K."/>
            <person name="Bhonagiri V."/>
            <person name="Nash W."/>
            <person name="Johnson M."/>
            <person name="Thiruvilangam P."/>
            <person name="Wilson R."/>
        </authorList>
    </citation>
    <scope>NUCLEOTIDE SEQUENCE [LARGE SCALE GENOMIC DNA]</scope>
    <source>
        <strain>ATCC BAA-731 / CDC346-86 / RSK2980</strain>
    </source>
</reference>
<feature type="chain" id="PRO_1000085412" description="tRNA-modifying protein YgfZ">
    <location>
        <begin position="1"/>
        <end position="326"/>
    </location>
</feature>
<feature type="binding site" evidence="1">
    <location>
        <position position="27"/>
    </location>
    <ligand>
        <name>folate</name>
        <dbReference type="ChEBI" id="CHEBI:62501"/>
    </ligand>
</feature>
<feature type="binding site" evidence="1">
    <location>
        <position position="189"/>
    </location>
    <ligand>
        <name>folate</name>
        <dbReference type="ChEBI" id="CHEBI:62501"/>
    </ligand>
</feature>
<accession>A9MRH6</accession>
<gene>
    <name evidence="1" type="primary">ygfZ</name>
    <name type="ordered locus">SARI_04602</name>
</gene>
<organism>
    <name type="scientific">Salmonella arizonae (strain ATCC BAA-731 / CDC346-86 / RSK2980)</name>
    <dbReference type="NCBI Taxonomy" id="41514"/>
    <lineage>
        <taxon>Bacteria</taxon>
        <taxon>Pseudomonadati</taxon>
        <taxon>Pseudomonadota</taxon>
        <taxon>Gammaproteobacteria</taxon>
        <taxon>Enterobacterales</taxon>
        <taxon>Enterobacteriaceae</taxon>
        <taxon>Salmonella</taxon>
    </lineage>
</organism>
<dbReference type="EMBL" id="CP000880">
    <property type="protein sequence ID" value="ABX24374.1"/>
    <property type="molecule type" value="Genomic_DNA"/>
</dbReference>
<dbReference type="SMR" id="A9MRH6"/>
<dbReference type="STRING" id="41514.SARI_04602"/>
<dbReference type="KEGG" id="ses:SARI_04602"/>
<dbReference type="HOGENOM" id="CLU_007884_6_1_6"/>
<dbReference type="Proteomes" id="UP000002084">
    <property type="component" value="Chromosome"/>
</dbReference>
<dbReference type="GO" id="GO:0005737">
    <property type="term" value="C:cytoplasm"/>
    <property type="evidence" value="ECO:0007669"/>
    <property type="project" value="UniProtKB-SubCell"/>
</dbReference>
<dbReference type="GO" id="GO:0005542">
    <property type="term" value="F:folic acid binding"/>
    <property type="evidence" value="ECO:0007669"/>
    <property type="project" value="UniProtKB-UniRule"/>
</dbReference>
<dbReference type="GO" id="GO:0016226">
    <property type="term" value="P:iron-sulfur cluster assembly"/>
    <property type="evidence" value="ECO:0007669"/>
    <property type="project" value="TreeGrafter"/>
</dbReference>
<dbReference type="GO" id="GO:0009451">
    <property type="term" value="P:RNA modification"/>
    <property type="evidence" value="ECO:0007669"/>
    <property type="project" value="InterPro"/>
</dbReference>
<dbReference type="GO" id="GO:0008033">
    <property type="term" value="P:tRNA processing"/>
    <property type="evidence" value="ECO:0007669"/>
    <property type="project" value="UniProtKB-UniRule"/>
</dbReference>
<dbReference type="FunFam" id="2.40.30.160:FF:000001">
    <property type="entry name" value="tRNA-modifying protein YgfZ"/>
    <property type="match status" value="1"/>
</dbReference>
<dbReference type="FunFam" id="3.30.70.1400:FF:000002">
    <property type="entry name" value="tRNA-modifying protein YgfZ"/>
    <property type="match status" value="1"/>
</dbReference>
<dbReference type="FunFam" id="3.30.70.1630:FF:000001">
    <property type="entry name" value="tRNA-modifying protein YgfZ"/>
    <property type="match status" value="1"/>
</dbReference>
<dbReference type="Gene3D" id="2.40.30.160">
    <property type="match status" value="1"/>
</dbReference>
<dbReference type="Gene3D" id="3.30.70.1630">
    <property type="match status" value="1"/>
</dbReference>
<dbReference type="Gene3D" id="3.30.70.1400">
    <property type="entry name" value="Aminomethyltransferase beta-barrel domains"/>
    <property type="match status" value="1"/>
</dbReference>
<dbReference type="HAMAP" id="MF_01175">
    <property type="entry name" value="tRNA_modifying_YgfZ"/>
    <property type="match status" value="1"/>
</dbReference>
<dbReference type="InterPro" id="IPR006222">
    <property type="entry name" value="GCV_T_N"/>
</dbReference>
<dbReference type="InterPro" id="IPR029043">
    <property type="entry name" value="GcvT/YgfZ_C"/>
</dbReference>
<dbReference type="InterPro" id="IPR023758">
    <property type="entry name" value="tRNA-modifying_YgfZ"/>
</dbReference>
<dbReference type="InterPro" id="IPR045179">
    <property type="entry name" value="YgfZ/GcvT"/>
</dbReference>
<dbReference type="InterPro" id="IPR017703">
    <property type="entry name" value="YgfZ/GcvT_CS"/>
</dbReference>
<dbReference type="InterPro" id="IPR048451">
    <property type="entry name" value="YgfZ_barrel"/>
</dbReference>
<dbReference type="NCBIfam" id="NF007110">
    <property type="entry name" value="PRK09559.1"/>
    <property type="match status" value="1"/>
</dbReference>
<dbReference type="NCBIfam" id="TIGR03317">
    <property type="entry name" value="ygfZ_signature"/>
    <property type="match status" value="1"/>
</dbReference>
<dbReference type="PANTHER" id="PTHR22602">
    <property type="entry name" value="TRANSFERASE CAF17, MITOCHONDRIAL-RELATED"/>
    <property type="match status" value="1"/>
</dbReference>
<dbReference type="PANTHER" id="PTHR22602:SF0">
    <property type="entry name" value="TRANSFERASE CAF17, MITOCHONDRIAL-RELATED"/>
    <property type="match status" value="1"/>
</dbReference>
<dbReference type="Pfam" id="PF01571">
    <property type="entry name" value="GCV_T"/>
    <property type="match status" value="1"/>
</dbReference>
<dbReference type="Pfam" id="PF21130">
    <property type="entry name" value="YgfZ_barrel"/>
    <property type="match status" value="1"/>
</dbReference>
<dbReference type="SUPFAM" id="SSF101790">
    <property type="entry name" value="Aminomethyltransferase beta-barrel domain"/>
    <property type="match status" value="1"/>
</dbReference>
<dbReference type="SUPFAM" id="SSF103025">
    <property type="entry name" value="Folate-binding domain"/>
    <property type="match status" value="1"/>
</dbReference>
<evidence type="ECO:0000255" key="1">
    <source>
        <dbReference type="HAMAP-Rule" id="MF_01175"/>
    </source>
</evidence>
<protein>
    <recommendedName>
        <fullName evidence="1">tRNA-modifying protein YgfZ</fullName>
    </recommendedName>
</protein>
<proteinExistence type="inferred from homology"/>
<keyword id="KW-0963">Cytoplasm</keyword>
<keyword id="KW-0290">Folate-binding</keyword>
<keyword id="KW-1185">Reference proteome</keyword>
<keyword id="KW-0819">tRNA processing</keyword>
<comment type="function">
    <text evidence="1">Folate-binding protein involved in regulating the level of ATP-DnaA and in the modification of some tRNAs. It is probably a key factor in regulatory networks that act via tRNA modification, such as initiation of chromosomal replication.</text>
</comment>
<comment type="subcellular location">
    <subcellularLocation>
        <location evidence="1">Cytoplasm</location>
    </subcellularLocation>
</comment>
<comment type="similarity">
    <text evidence="1">Belongs to the tRNA-modifying YgfZ family.</text>
</comment>
<name>YGFZ_SALAR</name>
<sequence>MAFISFPPRHPSASARLPLTLIALDDWALATITGVDSEKYIQGQVTADVSQMTEQQHLLTAHCDAKGKMWSNLRLFREREGFVWIERRSVREAQLTELKKYAVFSKVVIAPDDDRVLLGVAGFQARAALANVFSDLPNSENQVVRDGASTLLWFEHPAERFLLVTDVATVNMLTEKLHGEAELNNSQQWLALDIEAGIPVIDAANSGQFIPQATNLQALGGISFKKGCYTGQEMVARAKFRGANKRALWLLAGKASRVPEAGEDLELQMGENWRRTGAILAATQLDDGQLLVQAVMNNDLETESVFRVRDDVNTLHIIPLPYSLEE</sequence>